<keyword id="KW-0460">Magnesium</keyword>
<keyword id="KW-0479">Metal-binding</keyword>
<keyword id="KW-1185">Reference proteome</keyword>
<keyword id="KW-0808">Transferase</keyword>
<organism>
    <name type="scientific">Methanopyrus kandleri (strain AV19 / DSM 6324 / JCM 9639 / NBRC 100938)</name>
    <dbReference type="NCBI Taxonomy" id="190192"/>
    <lineage>
        <taxon>Archaea</taxon>
        <taxon>Methanobacteriati</taxon>
        <taxon>Methanobacteriota</taxon>
        <taxon>Methanomada group</taxon>
        <taxon>Methanopyri</taxon>
        <taxon>Methanopyrales</taxon>
        <taxon>Methanopyraceae</taxon>
        <taxon>Methanopyrus</taxon>
    </lineage>
</organism>
<sequence>MKRVTGVNSRRVLRQAVRVSLKPVYKMYERILEEKVKEGRVPEHVGIIMDGNRRFARELGLEPWEGHRYGADKLEDVLEWCLDLGVKAVTVYALSTENLNRPKEELKRLFDLMEERFKALAESERIHRRKVAVRAVGRLHLLPTRVRRAIKKAERATKEYKDRFLNVAVAYGGRQEIIDAVREIAHDVKVGRLDPDEIDEGTFRKYVYVGDLPDPELIIRTSGEERLSNFLLWYSAYSELYFVDVYWPEFRKIDLLRAIREFQKRERRFGR</sequence>
<accession>Q8TXA7</accession>
<comment type="function">
    <text evidence="1">Catalyzes the sequential condensation of isopentenyl diphosphate (IPP) with geranylgeranyl diphosphate (GGPP) to yield (2Z,6Z,10Z,14Z,18Z,22Z,26Z,30E,34E,38E)-undecaprenyl diphosphate (tritrans,heptacis-UPP). It is probably the precursor of glycosyl carrier lipids.</text>
</comment>
<comment type="catalytic activity">
    <reaction evidence="1">
        <text>geranylgeranyl diphosphate + 7 isopentenyl diphosphate = tri-trans,hepta-cis-undecaprenyl diphosphate + 7 diphosphate</text>
        <dbReference type="Rhea" id="RHEA:27622"/>
        <dbReference type="ChEBI" id="CHEBI:33019"/>
        <dbReference type="ChEBI" id="CHEBI:57533"/>
        <dbReference type="ChEBI" id="CHEBI:60388"/>
        <dbReference type="ChEBI" id="CHEBI:128769"/>
        <dbReference type="EC" id="2.5.1.89"/>
    </reaction>
</comment>
<comment type="cofactor">
    <cofactor evidence="1">
        <name>Mg(2+)</name>
        <dbReference type="ChEBI" id="CHEBI:18420"/>
    </cofactor>
    <text evidence="1">Binds 2 magnesium ions per subunit.</text>
</comment>
<comment type="subunit">
    <text evidence="1">Homodimer.</text>
</comment>
<comment type="similarity">
    <text evidence="1">Belongs to the UPP synthase family.</text>
</comment>
<reference key="1">
    <citation type="journal article" date="2002" name="Proc. Natl. Acad. Sci. U.S.A.">
        <title>The complete genome of hyperthermophile Methanopyrus kandleri AV19 and monophyly of archaeal methanogens.</title>
        <authorList>
            <person name="Slesarev A.I."/>
            <person name="Mezhevaya K.V."/>
            <person name="Makarova K.S."/>
            <person name="Polushin N.N."/>
            <person name="Shcherbinina O.V."/>
            <person name="Shakhova V.V."/>
            <person name="Belova G.I."/>
            <person name="Aravind L."/>
            <person name="Natale D.A."/>
            <person name="Rogozin I.B."/>
            <person name="Tatusov R.L."/>
            <person name="Wolf Y.I."/>
            <person name="Stetter K.O."/>
            <person name="Malykh A.G."/>
            <person name="Koonin E.V."/>
            <person name="Kozyavkin S.A."/>
        </authorList>
    </citation>
    <scope>NUCLEOTIDE SEQUENCE [LARGE SCALE GENOMIC DNA]</scope>
    <source>
        <strain>AV19 / DSM 6324 / JCM 9639 / NBRC 100938</strain>
    </source>
</reference>
<proteinExistence type="inferred from homology"/>
<gene>
    <name evidence="1" type="primary">uppS</name>
    <name type="ordered locus">MK0767</name>
</gene>
<protein>
    <recommendedName>
        <fullName evidence="1">Tritrans,polycis-undecaprenyl-diphosphate synthase (geranylgeranyl-diphosphate specific)</fullName>
        <ecNumber evidence="1">2.5.1.89</ecNumber>
    </recommendedName>
    <alternativeName>
        <fullName evidence="1">Undecaprenyl diphosphate synthase</fullName>
        <shortName evidence="1">UDS</shortName>
    </alternativeName>
    <alternativeName>
        <fullName evidence="1">Undecaprenyl pyrophosphate synthase</fullName>
        <shortName evidence="1">UPP synthase</shortName>
    </alternativeName>
</protein>
<evidence type="ECO:0000255" key="1">
    <source>
        <dbReference type="HAMAP-Rule" id="MF_01139"/>
    </source>
</evidence>
<dbReference type="EC" id="2.5.1.89" evidence="1"/>
<dbReference type="EMBL" id="AE009439">
    <property type="protein sequence ID" value="AAM01981.1"/>
    <property type="molecule type" value="Genomic_DNA"/>
</dbReference>
<dbReference type="SMR" id="Q8TXA7"/>
<dbReference type="FunCoup" id="Q8TXA7">
    <property type="interactions" value="159"/>
</dbReference>
<dbReference type="STRING" id="190192.MK0767"/>
<dbReference type="PaxDb" id="190192-MK0767"/>
<dbReference type="EnsemblBacteria" id="AAM01981">
    <property type="protein sequence ID" value="AAM01981"/>
    <property type="gene ID" value="MK0767"/>
</dbReference>
<dbReference type="KEGG" id="mka:MK0767"/>
<dbReference type="PATRIC" id="fig|190192.8.peg.807"/>
<dbReference type="HOGENOM" id="CLU_038505_2_0_2"/>
<dbReference type="InParanoid" id="Q8TXA7"/>
<dbReference type="Proteomes" id="UP000001826">
    <property type="component" value="Chromosome"/>
</dbReference>
<dbReference type="GO" id="GO:0045547">
    <property type="term" value="F:ditrans,polycis-polyprenyl diphosphate synthase [(2E,6E)-farnesyl diphosphate specific] activity"/>
    <property type="evidence" value="ECO:0007669"/>
    <property type="project" value="TreeGrafter"/>
</dbReference>
<dbReference type="GO" id="GO:0000287">
    <property type="term" value="F:magnesium ion binding"/>
    <property type="evidence" value="ECO:0007669"/>
    <property type="project" value="UniProtKB-UniRule"/>
</dbReference>
<dbReference type="GO" id="GO:0016094">
    <property type="term" value="P:polyprenol biosynthetic process"/>
    <property type="evidence" value="ECO:0007669"/>
    <property type="project" value="TreeGrafter"/>
</dbReference>
<dbReference type="CDD" id="cd00475">
    <property type="entry name" value="Cis_IPPS"/>
    <property type="match status" value="1"/>
</dbReference>
<dbReference type="FunFam" id="3.40.1180.10:FF:000003">
    <property type="entry name" value="Isoprenyl transferase 2"/>
    <property type="match status" value="1"/>
</dbReference>
<dbReference type="Gene3D" id="3.40.1180.10">
    <property type="entry name" value="Decaprenyl diphosphate synthase-like"/>
    <property type="match status" value="1"/>
</dbReference>
<dbReference type="HAMAP" id="MF_01139">
    <property type="entry name" value="ISPT"/>
    <property type="match status" value="1"/>
</dbReference>
<dbReference type="InterPro" id="IPR001441">
    <property type="entry name" value="UPP_synth-like"/>
</dbReference>
<dbReference type="InterPro" id="IPR018520">
    <property type="entry name" value="UPP_synth-like_CS"/>
</dbReference>
<dbReference type="InterPro" id="IPR036424">
    <property type="entry name" value="UPP_synth-like_sf"/>
</dbReference>
<dbReference type="NCBIfam" id="TIGR00055">
    <property type="entry name" value="uppS"/>
    <property type="match status" value="1"/>
</dbReference>
<dbReference type="PANTHER" id="PTHR10291:SF43">
    <property type="entry name" value="DEHYDRODOLICHYL DIPHOSPHATE SYNTHASE COMPLEX SUBUNIT DHDDS"/>
    <property type="match status" value="1"/>
</dbReference>
<dbReference type="PANTHER" id="PTHR10291">
    <property type="entry name" value="DEHYDRODOLICHYL DIPHOSPHATE SYNTHASE FAMILY MEMBER"/>
    <property type="match status" value="1"/>
</dbReference>
<dbReference type="Pfam" id="PF01255">
    <property type="entry name" value="Prenyltransf"/>
    <property type="match status" value="1"/>
</dbReference>
<dbReference type="SUPFAM" id="SSF64005">
    <property type="entry name" value="Undecaprenyl diphosphate synthase"/>
    <property type="match status" value="1"/>
</dbReference>
<dbReference type="PROSITE" id="PS01066">
    <property type="entry name" value="UPP_SYNTHASE"/>
    <property type="match status" value="1"/>
</dbReference>
<feature type="chain" id="PRO_0000123732" description="Tritrans,polycis-undecaprenyl-diphosphate synthase (geranylgeranyl-diphosphate specific)">
    <location>
        <begin position="1"/>
        <end position="271"/>
    </location>
</feature>
<feature type="active site" evidence="1">
    <location>
        <position position="50"/>
    </location>
</feature>
<feature type="active site" description="Proton acceptor" evidence="1">
    <location>
        <position position="98"/>
    </location>
</feature>
<feature type="binding site" evidence="1">
    <location>
        <position position="50"/>
    </location>
    <ligand>
        <name>Mg(2+)</name>
        <dbReference type="ChEBI" id="CHEBI:18420"/>
    </ligand>
</feature>
<feature type="binding site" evidence="1">
    <location>
        <begin position="51"/>
        <end position="54"/>
    </location>
    <ligand>
        <name>substrate</name>
    </ligand>
</feature>
<feature type="binding site" evidence="1">
    <location>
        <position position="55"/>
    </location>
    <ligand>
        <name>substrate</name>
    </ligand>
</feature>
<feature type="binding site" evidence="1">
    <location>
        <position position="67"/>
    </location>
    <ligand>
        <name>substrate</name>
    </ligand>
</feature>
<feature type="binding site" evidence="1">
    <location>
        <begin position="95"/>
        <end position="97"/>
    </location>
    <ligand>
        <name>substrate</name>
    </ligand>
</feature>
<feature type="binding site" evidence="1">
    <location>
        <position position="101"/>
    </location>
    <ligand>
        <name>substrate</name>
    </ligand>
</feature>
<feature type="binding site" evidence="1">
    <location>
        <position position="220"/>
    </location>
    <ligand>
        <name>substrate</name>
    </ligand>
</feature>
<feature type="binding site" evidence="1">
    <location>
        <begin position="226"/>
        <end position="228"/>
    </location>
    <ligand>
        <name>substrate</name>
    </ligand>
</feature>
<feature type="binding site" evidence="1">
    <location>
        <position position="239"/>
    </location>
    <ligand>
        <name>Mg(2+)</name>
        <dbReference type="ChEBI" id="CHEBI:18420"/>
    </ligand>
</feature>
<name>UPPS_METKA</name>